<sequence length="444" mass="49348">MRNIIYFILLLFSCTGYALETINIECGRADPTPIAVNKFDADTSTNNIVGHDVVKVISNDLKLSGLFHPISSASFIEDKTGIEDKPLFAAWRQINASLLVNGEVKKLESGKLKISFILWDTLLEKQLVGEILEVPENLWRRAAHKIADKIYEKITGDAGYFDTKIVYVSESSSLPKIKRIALMDYDGANNKYLTNGTSLVLTPRFARSVDKIFYVSYATKRRALIYEKDLKTGKESIVSDFAGISFAPRFSPDGRKAVMSIAKNGSTHIYEIDLATKQLHKLTDGFGINTSPSYSPDGKKIVYNSDRNGVPQLYIMNSDGSNVKRISFGGGSYAAPSWSPRGDYIAFTKITRGEDGSKTFNIGIMKAYPQDDENSERIITSGYLVESPCWSPNGRVIMFAKGWPSRAKVPGKNKIFAIDLTGHNEREIITPEDASDPEWSMVLN</sequence>
<evidence type="ECO:0000255" key="1">
    <source>
        <dbReference type="HAMAP-Rule" id="MF_00671"/>
    </source>
</evidence>
<gene>
    <name evidence="1" type="primary">tolB</name>
    <name type="ordered locus">A1E_04055</name>
</gene>
<accession>A8EZF5</accession>
<dbReference type="EMBL" id="CP000409">
    <property type="protein sequence ID" value="ABV73738.1"/>
    <property type="molecule type" value="Genomic_DNA"/>
</dbReference>
<dbReference type="RefSeq" id="WP_012148933.1">
    <property type="nucleotide sequence ID" value="NC_009879.1"/>
</dbReference>
<dbReference type="SMR" id="A8EZF5"/>
<dbReference type="STRING" id="293613.A1E_04055"/>
<dbReference type="KEGG" id="rcm:A1E_04055"/>
<dbReference type="eggNOG" id="COG0823">
    <property type="taxonomic scope" value="Bacteria"/>
</dbReference>
<dbReference type="HOGENOM" id="CLU_047123_0_0_5"/>
<dbReference type="Proteomes" id="UP000007056">
    <property type="component" value="Chromosome"/>
</dbReference>
<dbReference type="GO" id="GO:0042597">
    <property type="term" value="C:periplasmic space"/>
    <property type="evidence" value="ECO:0007669"/>
    <property type="project" value="UniProtKB-SubCell"/>
</dbReference>
<dbReference type="GO" id="GO:0051301">
    <property type="term" value="P:cell division"/>
    <property type="evidence" value="ECO:0007669"/>
    <property type="project" value="UniProtKB-UniRule"/>
</dbReference>
<dbReference type="GO" id="GO:0017038">
    <property type="term" value="P:protein import"/>
    <property type="evidence" value="ECO:0007669"/>
    <property type="project" value="InterPro"/>
</dbReference>
<dbReference type="Gene3D" id="2.120.10.30">
    <property type="entry name" value="TolB, C-terminal domain"/>
    <property type="match status" value="1"/>
</dbReference>
<dbReference type="Gene3D" id="3.40.50.10070">
    <property type="entry name" value="TolB, N-terminal domain"/>
    <property type="match status" value="1"/>
</dbReference>
<dbReference type="HAMAP" id="MF_00671">
    <property type="entry name" value="TolB"/>
    <property type="match status" value="1"/>
</dbReference>
<dbReference type="InterPro" id="IPR011042">
    <property type="entry name" value="6-blade_b-propeller_TolB-like"/>
</dbReference>
<dbReference type="InterPro" id="IPR011659">
    <property type="entry name" value="PD40"/>
</dbReference>
<dbReference type="InterPro" id="IPR014167">
    <property type="entry name" value="Tol-Pal_TolB"/>
</dbReference>
<dbReference type="InterPro" id="IPR007195">
    <property type="entry name" value="TolB_N"/>
</dbReference>
<dbReference type="NCBIfam" id="TIGR02800">
    <property type="entry name" value="propeller_TolB"/>
    <property type="match status" value="1"/>
</dbReference>
<dbReference type="PANTHER" id="PTHR36842:SF1">
    <property type="entry name" value="PROTEIN TOLB"/>
    <property type="match status" value="1"/>
</dbReference>
<dbReference type="PANTHER" id="PTHR36842">
    <property type="entry name" value="PROTEIN TOLB HOMOLOG"/>
    <property type="match status" value="1"/>
</dbReference>
<dbReference type="Pfam" id="PF07676">
    <property type="entry name" value="PD40"/>
    <property type="match status" value="4"/>
</dbReference>
<dbReference type="Pfam" id="PF04052">
    <property type="entry name" value="TolB_N"/>
    <property type="match status" value="1"/>
</dbReference>
<dbReference type="SUPFAM" id="SSF52964">
    <property type="entry name" value="TolB, N-terminal domain"/>
    <property type="match status" value="1"/>
</dbReference>
<dbReference type="SUPFAM" id="SSF69304">
    <property type="entry name" value="Tricorn protease N-terminal domain"/>
    <property type="match status" value="1"/>
</dbReference>
<feature type="signal peptide" evidence="1">
    <location>
        <begin position="1"/>
        <end position="18"/>
    </location>
</feature>
<feature type="chain" id="PRO_1000026709" description="Tol-Pal system protein TolB" evidence="1">
    <location>
        <begin position="19"/>
        <end position="444"/>
    </location>
</feature>
<proteinExistence type="inferred from homology"/>
<protein>
    <recommendedName>
        <fullName evidence="1">Tol-Pal system protein TolB</fullName>
    </recommendedName>
</protein>
<keyword id="KW-0131">Cell cycle</keyword>
<keyword id="KW-0132">Cell division</keyword>
<keyword id="KW-0574">Periplasm</keyword>
<keyword id="KW-0732">Signal</keyword>
<name>TOLB_RICCK</name>
<reference key="1">
    <citation type="submission" date="2007-09" db="EMBL/GenBank/DDBJ databases">
        <title>Complete genome sequence of Rickettsia canadensis.</title>
        <authorList>
            <person name="Madan A."/>
            <person name="Fahey J."/>
            <person name="Helton E."/>
            <person name="Ketteman M."/>
            <person name="Madan A."/>
            <person name="Rodrigues S."/>
            <person name="Sanchez A."/>
            <person name="Whiting M."/>
            <person name="Dasch G."/>
            <person name="Eremeeva M."/>
        </authorList>
    </citation>
    <scope>NUCLEOTIDE SEQUENCE [LARGE SCALE GENOMIC DNA]</scope>
    <source>
        <strain>McKiel</strain>
    </source>
</reference>
<organism>
    <name type="scientific">Rickettsia canadensis (strain McKiel)</name>
    <dbReference type="NCBI Taxonomy" id="293613"/>
    <lineage>
        <taxon>Bacteria</taxon>
        <taxon>Pseudomonadati</taxon>
        <taxon>Pseudomonadota</taxon>
        <taxon>Alphaproteobacteria</taxon>
        <taxon>Rickettsiales</taxon>
        <taxon>Rickettsiaceae</taxon>
        <taxon>Rickettsieae</taxon>
        <taxon>Rickettsia</taxon>
        <taxon>belli group</taxon>
    </lineage>
</organism>
<comment type="function">
    <text evidence="1">Part of the Tol-Pal system, which plays a role in outer membrane invagination during cell division and is important for maintaining outer membrane integrity.</text>
</comment>
<comment type="subunit">
    <text evidence="1">The Tol-Pal system is composed of five core proteins: the inner membrane proteins TolA, TolQ and TolR, the periplasmic protein TolB and the outer membrane protein Pal. They form a network linking the inner and outer membranes and the peptidoglycan layer.</text>
</comment>
<comment type="subcellular location">
    <subcellularLocation>
        <location evidence="1">Periplasm</location>
    </subcellularLocation>
</comment>
<comment type="similarity">
    <text evidence="1">Belongs to the TolB family.</text>
</comment>